<gene>
    <name evidence="1" type="primary">FEM1C</name>
</gene>
<reference key="1">
    <citation type="submission" date="2007-07" db="EMBL/GenBank/DDBJ databases">
        <authorList>
            <consortium name="NIH - Mammalian Gene Collection (MGC) project"/>
        </authorList>
    </citation>
    <scope>NUCLEOTIDE SEQUENCE [LARGE SCALE MRNA]</scope>
    <source>
        <strain>Hereford</strain>
        <tissue>Ascending colon</tissue>
    </source>
</reference>
<dbReference type="EMBL" id="BC151399">
    <property type="protein sequence ID" value="AAI51400.1"/>
    <property type="molecule type" value="mRNA"/>
</dbReference>
<dbReference type="RefSeq" id="NP_001094689.1">
    <property type="nucleotide sequence ID" value="NM_001101219.1"/>
</dbReference>
<dbReference type="RefSeq" id="XP_005211271.1">
    <property type="nucleotide sequence ID" value="XM_005211214.3"/>
</dbReference>
<dbReference type="RefSeq" id="XP_010807137.1">
    <property type="nucleotide sequence ID" value="XM_010808835.2"/>
</dbReference>
<dbReference type="RefSeq" id="XP_010807138.1">
    <property type="nucleotide sequence ID" value="XM_010808836.2"/>
</dbReference>
<dbReference type="RefSeq" id="XP_059746591.1">
    <property type="nucleotide sequence ID" value="XM_059890608.1"/>
</dbReference>
<dbReference type="RefSeq" id="XP_059746592.1">
    <property type="nucleotide sequence ID" value="XM_059890609.1"/>
</dbReference>
<dbReference type="RefSeq" id="XP_059746593.1">
    <property type="nucleotide sequence ID" value="XM_059890610.1"/>
</dbReference>
<dbReference type="SMR" id="A7MB89"/>
<dbReference type="FunCoup" id="A7MB89">
    <property type="interactions" value="3402"/>
</dbReference>
<dbReference type="STRING" id="9913.ENSBTAP00000011464"/>
<dbReference type="PaxDb" id="9913-ENSBTAP00000011464"/>
<dbReference type="Ensembl" id="ENSBTAT00000011464.4">
    <property type="protein sequence ID" value="ENSBTAP00000011464.3"/>
    <property type="gene ID" value="ENSBTAG00000008699.5"/>
</dbReference>
<dbReference type="GeneID" id="541180"/>
<dbReference type="KEGG" id="bta:541180"/>
<dbReference type="CTD" id="56929"/>
<dbReference type="VEuPathDB" id="HostDB:ENSBTAG00000008699"/>
<dbReference type="VGNC" id="VGNC:28946">
    <property type="gene designation" value="FEM1C"/>
</dbReference>
<dbReference type="eggNOG" id="KOG0508">
    <property type="taxonomic scope" value="Eukaryota"/>
</dbReference>
<dbReference type="GeneTree" id="ENSGT00940000158626"/>
<dbReference type="HOGENOM" id="CLU_020042_2_0_1"/>
<dbReference type="InParanoid" id="A7MB89"/>
<dbReference type="OMA" id="FMTTEWR"/>
<dbReference type="OrthoDB" id="4429489at2759"/>
<dbReference type="TreeFam" id="TF351376"/>
<dbReference type="Reactome" id="R-BTA-8951664">
    <property type="pathway name" value="Neddylation"/>
</dbReference>
<dbReference type="UniPathway" id="UPA00143"/>
<dbReference type="Proteomes" id="UP000009136">
    <property type="component" value="Chromosome 10"/>
</dbReference>
<dbReference type="Bgee" id="ENSBTAG00000008699">
    <property type="expression patterns" value="Expressed in spermatid and 104 other cell types or tissues"/>
</dbReference>
<dbReference type="GO" id="GO:0031462">
    <property type="term" value="C:Cul2-RING ubiquitin ligase complex"/>
    <property type="evidence" value="ECO:0000250"/>
    <property type="project" value="UniProtKB"/>
</dbReference>
<dbReference type="GO" id="GO:0005829">
    <property type="term" value="C:cytosol"/>
    <property type="evidence" value="ECO:0007669"/>
    <property type="project" value="Ensembl"/>
</dbReference>
<dbReference type="GO" id="GO:0005654">
    <property type="term" value="C:nucleoplasm"/>
    <property type="evidence" value="ECO:0007669"/>
    <property type="project" value="Ensembl"/>
</dbReference>
<dbReference type="GO" id="GO:0000151">
    <property type="term" value="C:ubiquitin ligase complex"/>
    <property type="evidence" value="ECO:0000318"/>
    <property type="project" value="GO_Central"/>
</dbReference>
<dbReference type="GO" id="GO:1990756">
    <property type="term" value="F:ubiquitin-like ligase-substrate adaptor activity"/>
    <property type="evidence" value="ECO:0000250"/>
    <property type="project" value="UniProtKB"/>
</dbReference>
<dbReference type="GO" id="GO:0043161">
    <property type="term" value="P:proteasome-mediated ubiquitin-dependent protein catabolic process"/>
    <property type="evidence" value="ECO:0000250"/>
    <property type="project" value="UniProtKB"/>
</dbReference>
<dbReference type="GO" id="GO:0016567">
    <property type="term" value="P:protein ubiquitination"/>
    <property type="evidence" value="ECO:0007669"/>
    <property type="project" value="UniProtKB-UniPathway"/>
</dbReference>
<dbReference type="GO" id="GO:0140627">
    <property type="term" value="P:ubiquitin-dependent protein catabolic process via the C-end degron rule pathway"/>
    <property type="evidence" value="ECO:0000250"/>
    <property type="project" value="UniProtKB"/>
</dbReference>
<dbReference type="FunFam" id="1.25.40.10:FF:000104">
    <property type="entry name" value="Fem-1 homolog c (C.elegans)"/>
    <property type="match status" value="1"/>
</dbReference>
<dbReference type="FunFam" id="1.25.40.20:FF:000076">
    <property type="entry name" value="Fem-1 homolog c (C.elegans)"/>
    <property type="match status" value="1"/>
</dbReference>
<dbReference type="FunFam" id="1.25.40.20:FF:000163">
    <property type="entry name" value="Fem-1 homolog c (C.elegans)"/>
    <property type="match status" value="1"/>
</dbReference>
<dbReference type="FunFam" id="1.25.40.20:FF:000173">
    <property type="entry name" value="Fem-1 homolog c (C.elegans)"/>
    <property type="match status" value="1"/>
</dbReference>
<dbReference type="Gene3D" id="1.25.40.20">
    <property type="entry name" value="Ankyrin repeat-containing domain"/>
    <property type="match status" value="3"/>
</dbReference>
<dbReference type="Gene3D" id="1.25.40.10">
    <property type="entry name" value="Tetratricopeptide repeat domain"/>
    <property type="match status" value="1"/>
</dbReference>
<dbReference type="InterPro" id="IPR002110">
    <property type="entry name" value="Ankyrin_rpt"/>
</dbReference>
<dbReference type="InterPro" id="IPR036770">
    <property type="entry name" value="Ankyrin_rpt-contain_sf"/>
</dbReference>
<dbReference type="InterPro" id="IPR011990">
    <property type="entry name" value="TPR-like_helical_dom_sf"/>
</dbReference>
<dbReference type="PANTHER" id="PTHR24173">
    <property type="entry name" value="ANKYRIN REPEAT CONTAINING"/>
    <property type="match status" value="1"/>
</dbReference>
<dbReference type="PANTHER" id="PTHR24173:SF74">
    <property type="entry name" value="ANKYRIN REPEAT DOMAIN-CONTAINING PROTEIN 16"/>
    <property type="match status" value="1"/>
</dbReference>
<dbReference type="Pfam" id="PF00023">
    <property type="entry name" value="Ank"/>
    <property type="match status" value="1"/>
</dbReference>
<dbReference type="Pfam" id="PF12796">
    <property type="entry name" value="Ank_2"/>
    <property type="match status" value="3"/>
</dbReference>
<dbReference type="PRINTS" id="PR01415">
    <property type="entry name" value="ANKYRIN"/>
</dbReference>
<dbReference type="SMART" id="SM00248">
    <property type="entry name" value="ANK"/>
    <property type="match status" value="9"/>
</dbReference>
<dbReference type="SUPFAM" id="SSF48403">
    <property type="entry name" value="Ankyrin repeat"/>
    <property type="match status" value="2"/>
</dbReference>
<dbReference type="PROSITE" id="PS50297">
    <property type="entry name" value="ANK_REP_REGION"/>
    <property type="match status" value="2"/>
</dbReference>
<dbReference type="PROSITE" id="PS50088">
    <property type="entry name" value="ANK_REPEAT"/>
    <property type="match status" value="7"/>
</dbReference>
<organism>
    <name type="scientific">Bos taurus</name>
    <name type="common">Bovine</name>
    <dbReference type="NCBI Taxonomy" id="9913"/>
    <lineage>
        <taxon>Eukaryota</taxon>
        <taxon>Metazoa</taxon>
        <taxon>Chordata</taxon>
        <taxon>Craniata</taxon>
        <taxon>Vertebrata</taxon>
        <taxon>Euteleostomi</taxon>
        <taxon>Mammalia</taxon>
        <taxon>Eutheria</taxon>
        <taxon>Laurasiatheria</taxon>
        <taxon>Artiodactyla</taxon>
        <taxon>Ruminantia</taxon>
        <taxon>Pecora</taxon>
        <taxon>Bovidae</taxon>
        <taxon>Bovinae</taxon>
        <taxon>Bos</taxon>
    </lineage>
</organism>
<accession>A7MB89</accession>
<sequence length="617" mass="68700">MDLKTAVFNAARDGKLRLLTKLLASKSKEEVSSLISEKTNGATPLLMAARYGHLDMVEFLLEQCSASIEVGGSVNFDGETIEGAPPLWAASAAGHLKVVQSLLNHGASVNNTTLTNSTPLRAACFDGHLEIVKYLVEHKADLEVSNRHGHTCLMISCYKGHKEIAQYLLEKGADVNRKSVKGNTALHDCAESGSLDIMKMLLMYCAKMEKDGYGMTPLLSASVTGHTNIVDFLTHHAQTSKTERINALELLGATFVDKKRDLLGALKYWKKAMNMRYSDRTNIISKPVPQTLIMAYDYAKEVNSAEELEGLIADPDEMRMQALLIRERILGPSHPDTSYYIRYRGAVYADSGNFKRCINLWKYALDMQQNNLDPLSPMTASSLLSFAELFSFMLQDRAKGLLGTTVTFDDLMGILCKSVLEIERAIKQTQCPADPLQLNKALSIILHLICLLEKVPCTLEQDHFKKQTIYRFLKLHPRGKNNFSPLHLAVDKNTTCVGRYPVCKFPSLQVTAILIECGADVNVRDSDDNSPLHIAALNNHPDIMNLLIKSGAHFDATNLHKQTASDLLDEKEIAKNLIQPINHTTLQCLAARVIVNHRIYYKGHIPEKLETFVSLHR</sequence>
<proteinExistence type="evidence at transcript level"/>
<feature type="chain" id="PRO_0000324535" description="Protein fem-1 homolog C">
    <location>
        <begin position="1"/>
        <end position="617"/>
    </location>
</feature>
<feature type="repeat" description="ANK 1">
    <location>
        <begin position="2"/>
        <end position="31"/>
    </location>
</feature>
<feature type="repeat" description="ANK 2">
    <location>
        <begin position="40"/>
        <end position="70"/>
    </location>
</feature>
<feature type="repeat" description="ANK 3">
    <location>
        <begin position="82"/>
        <end position="111"/>
    </location>
</feature>
<feature type="repeat" description="ANK 4">
    <location>
        <begin position="115"/>
        <end position="144"/>
    </location>
</feature>
<feature type="repeat" description="ANK 5">
    <location>
        <begin position="148"/>
        <end position="177"/>
    </location>
</feature>
<feature type="repeat" description="ANK 6">
    <location>
        <begin position="181"/>
        <end position="210"/>
    </location>
</feature>
<feature type="repeat" description="ANK 7">
    <location>
        <begin position="213"/>
        <end position="242"/>
    </location>
</feature>
<feature type="repeat" description="TPR 1">
    <location>
        <begin position="245"/>
        <end position="279"/>
    </location>
</feature>
<feature type="repeat" description="TPR 2">
    <location>
        <begin position="338"/>
        <end position="371"/>
    </location>
</feature>
<feature type="repeat" description="ANK 8">
    <location>
        <begin position="481"/>
        <end position="523"/>
    </location>
</feature>
<feature type="repeat" description="ANK 9">
    <location>
        <begin position="527"/>
        <end position="556"/>
    </location>
</feature>
<feature type="modified residue" description="N-acetylmethionine" evidence="1">
    <location>
        <position position="1"/>
    </location>
</feature>
<evidence type="ECO:0000250" key="1">
    <source>
        <dbReference type="UniProtKB" id="Q96JP0"/>
    </source>
</evidence>
<evidence type="ECO:0000305" key="2"/>
<name>FEM1C_BOVIN</name>
<protein>
    <recommendedName>
        <fullName evidence="2">Protein fem-1 homolog C</fullName>
        <shortName evidence="1">FEM1c</shortName>
    </recommendedName>
    <alternativeName>
        <fullName>FEM1-gamma</fullName>
    </alternativeName>
</protein>
<keyword id="KW-0007">Acetylation</keyword>
<keyword id="KW-0040">ANK repeat</keyword>
<keyword id="KW-1185">Reference proteome</keyword>
<keyword id="KW-0677">Repeat</keyword>
<keyword id="KW-0802">TPR repeat</keyword>
<keyword id="KW-0833">Ubl conjugation pathway</keyword>
<comment type="function">
    <text evidence="1">Substrate-recognition component of a Cul2-RING (CRL2) E3 ubiquitin-protein ligase complex of the DesCEND (destruction via C-end degrons) pathway, which recognizes a C-degron located at the extreme C terminus of target proteins, leading to their ubiquitination and degradation. The C-degron recognized by the DesCEND pathway is usually a motif of less than ten residues and can be present in full-length proteins, truncated proteins or proteolytically cleaved forms. The CRL2(FEM1C) complex specifically recognizes proteins with an arginine at the C-terminus: recognizes and binds proteins ending with -Lys/Arg-Xaa-Arg and -Lys/Arg-Xaa-Xaa-Arg C-degrons, such as SIL1 or OR51B2, leading to their ubiquitination and degradation. The CRL2(FEM1C) complex mediates ubiquitination and degradation of truncated MSRB1/SEPX1 selenoproteins produced by failed UGA/Sec decoding.</text>
</comment>
<comment type="pathway">
    <text evidence="1">Protein modification; protein ubiquitination.</text>
</comment>
<comment type="subunit">
    <text evidence="1">Component of a CRL2 E3 ubiquitin-protein ligase complex, also named ECS (Elongin BC-CUL2/5-SOCS-box protein) complex, composed of CUL2, Elongin BC (ELOB and ELOC), RBX1 and substrate-specific adapter FEM1C.</text>
</comment>
<comment type="domain">
    <text evidence="1">The first seven ANK repeats at the N-terminus (1-242) are essnetial for recognition of Lys/Arg-Xaa-Arg and -Lys/Arg-Xaa-Xaa-Arg C-degrons.</text>
</comment>
<comment type="similarity">
    <text evidence="2">Belongs to the fem-1 family.</text>
</comment>